<keyword id="KW-1185">Reference proteome</keyword>
<keyword id="KW-0687">Ribonucleoprotein</keyword>
<keyword id="KW-0689">Ribosomal protein</keyword>
<keyword id="KW-0694">RNA-binding</keyword>
<keyword id="KW-0699">rRNA-binding</keyword>
<organism>
    <name type="scientific">Fervidobacterium nodosum (strain ATCC 35602 / DSM 5306 / Rt17-B1)</name>
    <dbReference type="NCBI Taxonomy" id="381764"/>
    <lineage>
        <taxon>Bacteria</taxon>
        <taxon>Thermotogati</taxon>
        <taxon>Thermotogota</taxon>
        <taxon>Thermotogae</taxon>
        <taxon>Thermotogales</taxon>
        <taxon>Fervidobacteriaceae</taxon>
        <taxon>Fervidobacterium</taxon>
    </lineage>
</organism>
<accession>A7HK70</accession>
<sequence length="106" mass="11901">MYAIVENGGKQYKVEVGHLLHTEKMNGVAQGDKVVLDKVVLVKTDDGKVLVGKPYLTNVTITGIVVEHARARKILVGQFIPRKGHKTIKGHRQWYTTIKIENIEIK</sequence>
<comment type="function">
    <text evidence="1">This protein binds to 23S rRNA in the presence of protein L20.</text>
</comment>
<comment type="subunit">
    <text evidence="1">Part of the 50S ribosomal subunit. Contacts protein L20.</text>
</comment>
<comment type="similarity">
    <text evidence="1">Belongs to the bacterial ribosomal protein bL21 family.</text>
</comment>
<name>RL21_FERNB</name>
<feature type="chain" id="PRO_1000073386" description="Large ribosomal subunit protein bL21">
    <location>
        <begin position="1"/>
        <end position="106"/>
    </location>
</feature>
<dbReference type="EMBL" id="CP000771">
    <property type="protein sequence ID" value="ABS60303.1"/>
    <property type="molecule type" value="Genomic_DNA"/>
</dbReference>
<dbReference type="RefSeq" id="WP_011993623.1">
    <property type="nucleotide sequence ID" value="NC_009718.1"/>
</dbReference>
<dbReference type="SMR" id="A7HK70"/>
<dbReference type="STRING" id="381764.Fnod_0438"/>
<dbReference type="KEGG" id="fno:Fnod_0438"/>
<dbReference type="eggNOG" id="COG0261">
    <property type="taxonomic scope" value="Bacteria"/>
</dbReference>
<dbReference type="HOGENOM" id="CLU_061463_3_2_0"/>
<dbReference type="OrthoDB" id="9813334at2"/>
<dbReference type="Proteomes" id="UP000002415">
    <property type="component" value="Chromosome"/>
</dbReference>
<dbReference type="GO" id="GO:0005737">
    <property type="term" value="C:cytoplasm"/>
    <property type="evidence" value="ECO:0007669"/>
    <property type="project" value="UniProtKB-ARBA"/>
</dbReference>
<dbReference type="GO" id="GO:1990904">
    <property type="term" value="C:ribonucleoprotein complex"/>
    <property type="evidence" value="ECO:0007669"/>
    <property type="project" value="UniProtKB-KW"/>
</dbReference>
<dbReference type="GO" id="GO:0005840">
    <property type="term" value="C:ribosome"/>
    <property type="evidence" value="ECO:0007669"/>
    <property type="project" value="UniProtKB-KW"/>
</dbReference>
<dbReference type="GO" id="GO:0019843">
    <property type="term" value="F:rRNA binding"/>
    <property type="evidence" value="ECO:0007669"/>
    <property type="project" value="UniProtKB-UniRule"/>
</dbReference>
<dbReference type="GO" id="GO:0003735">
    <property type="term" value="F:structural constituent of ribosome"/>
    <property type="evidence" value="ECO:0007669"/>
    <property type="project" value="InterPro"/>
</dbReference>
<dbReference type="GO" id="GO:0006412">
    <property type="term" value="P:translation"/>
    <property type="evidence" value="ECO:0007669"/>
    <property type="project" value="UniProtKB-UniRule"/>
</dbReference>
<dbReference type="HAMAP" id="MF_01363">
    <property type="entry name" value="Ribosomal_bL21"/>
    <property type="match status" value="1"/>
</dbReference>
<dbReference type="InterPro" id="IPR028909">
    <property type="entry name" value="bL21-like"/>
</dbReference>
<dbReference type="InterPro" id="IPR036164">
    <property type="entry name" value="bL21-like_sf"/>
</dbReference>
<dbReference type="InterPro" id="IPR001787">
    <property type="entry name" value="Ribosomal_bL21"/>
</dbReference>
<dbReference type="NCBIfam" id="TIGR00061">
    <property type="entry name" value="L21"/>
    <property type="match status" value="1"/>
</dbReference>
<dbReference type="PANTHER" id="PTHR21349">
    <property type="entry name" value="50S RIBOSOMAL PROTEIN L21"/>
    <property type="match status" value="1"/>
</dbReference>
<dbReference type="PANTHER" id="PTHR21349:SF0">
    <property type="entry name" value="LARGE RIBOSOMAL SUBUNIT PROTEIN BL21M"/>
    <property type="match status" value="1"/>
</dbReference>
<dbReference type="Pfam" id="PF00829">
    <property type="entry name" value="Ribosomal_L21p"/>
    <property type="match status" value="1"/>
</dbReference>
<dbReference type="SUPFAM" id="SSF141091">
    <property type="entry name" value="L21p-like"/>
    <property type="match status" value="1"/>
</dbReference>
<gene>
    <name evidence="1" type="primary">rplU</name>
    <name type="ordered locus">Fnod_0438</name>
</gene>
<protein>
    <recommendedName>
        <fullName evidence="1">Large ribosomal subunit protein bL21</fullName>
    </recommendedName>
    <alternativeName>
        <fullName evidence="2">50S ribosomal protein L21</fullName>
    </alternativeName>
</protein>
<proteinExistence type="inferred from homology"/>
<evidence type="ECO:0000255" key="1">
    <source>
        <dbReference type="HAMAP-Rule" id="MF_01363"/>
    </source>
</evidence>
<evidence type="ECO:0000305" key="2"/>
<reference key="1">
    <citation type="submission" date="2007-07" db="EMBL/GenBank/DDBJ databases">
        <title>Complete sequence of Fervidobacterium nodosum Rt17-B1.</title>
        <authorList>
            <consortium name="US DOE Joint Genome Institute"/>
            <person name="Copeland A."/>
            <person name="Lucas S."/>
            <person name="Lapidus A."/>
            <person name="Barry K."/>
            <person name="Glavina del Rio T."/>
            <person name="Dalin E."/>
            <person name="Tice H."/>
            <person name="Pitluck S."/>
            <person name="Saunders E."/>
            <person name="Brettin T."/>
            <person name="Bruce D."/>
            <person name="Detter J.C."/>
            <person name="Han C."/>
            <person name="Schmutz J."/>
            <person name="Larimer F."/>
            <person name="Land M."/>
            <person name="Hauser L."/>
            <person name="Kyrpides N."/>
            <person name="Mikhailova N."/>
            <person name="Nelson K."/>
            <person name="Gogarten J.P."/>
            <person name="Noll K."/>
            <person name="Richardson P."/>
        </authorList>
    </citation>
    <scope>NUCLEOTIDE SEQUENCE [LARGE SCALE GENOMIC DNA]</scope>
    <source>
        <strain>ATCC 35602 / DSM 5306 / Rt17-B1</strain>
    </source>
</reference>